<reference key="1">
    <citation type="journal article" date="1988" name="EMBO J.">
        <title>Position dependent expression of a homeobox gene transcript in relation to amphibian limb regeneration.</title>
        <authorList>
            <person name="Savard P."/>
            <person name="Gates P.B."/>
            <person name="Brockes J.P."/>
        </authorList>
    </citation>
    <scope>NUCLEOTIDE SEQUENCE [MRNA]</scope>
</reference>
<reference key="2">
    <citation type="journal article" date="1989" name="Development">
        <title>Isolation of potential vertebrate limb-identity genes.</title>
        <authorList>
            <person name="Tabin C.J."/>
        </authorList>
    </citation>
    <scope>NUCLEOTIDE SEQUENCE [MRNA] OF 131-234</scope>
</reference>
<protein>
    <recommendedName>
        <fullName>Homeobox protein Hox-C6</fullName>
    </recommendedName>
    <alternativeName>
        <fullName>FH-2</fullName>
    </alternativeName>
    <alternativeName>
        <fullName>NvHox-1</fullName>
    </alternativeName>
</protein>
<accession>P14858</accession>
<accession>P14857</accession>
<evidence type="ECO:0000255" key="1">
    <source>
        <dbReference type="PROSITE-ProRule" id="PRU00108"/>
    </source>
</evidence>
<evidence type="ECO:0000256" key="2">
    <source>
        <dbReference type="SAM" id="MobiDB-lite"/>
    </source>
</evidence>
<evidence type="ECO:0000305" key="3"/>
<name>HXC6_NOTVI</name>
<dbReference type="EMBL" id="X13957">
    <property type="protein sequence ID" value="CAA32139.1"/>
    <property type="molecule type" value="mRNA"/>
</dbReference>
<dbReference type="EMBL" id="X16848">
    <property type="protein sequence ID" value="CAA34745.1"/>
    <property type="molecule type" value="mRNA"/>
</dbReference>
<dbReference type="PIR" id="S02014">
    <property type="entry name" value="S02014"/>
</dbReference>
<dbReference type="SMR" id="P14858"/>
<dbReference type="GO" id="GO:0005634">
    <property type="term" value="C:nucleus"/>
    <property type="evidence" value="ECO:0007669"/>
    <property type="project" value="UniProtKB-SubCell"/>
</dbReference>
<dbReference type="GO" id="GO:0000981">
    <property type="term" value="F:DNA-binding transcription factor activity, RNA polymerase II-specific"/>
    <property type="evidence" value="ECO:0007669"/>
    <property type="project" value="InterPro"/>
</dbReference>
<dbReference type="GO" id="GO:0000978">
    <property type="term" value="F:RNA polymerase II cis-regulatory region sequence-specific DNA binding"/>
    <property type="evidence" value="ECO:0007669"/>
    <property type="project" value="TreeGrafter"/>
</dbReference>
<dbReference type="GO" id="GO:0009952">
    <property type="term" value="P:anterior/posterior pattern specification"/>
    <property type="evidence" value="ECO:0007669"/>
    <property type="project" value="TreeGrafter"/>
</dbReference>
<dbReference type="CDD" id="cd00086">
    <property type="entry name" value="homeodomain"/>
    <property type="match status" value="1"/>
</dbReference>
<dbReference type="FunFam" id="1.10.10.60:FF:000879">
    <property type="match status" value="1"/>
</dbReference>
<dbReference type="Gene3D" id="1.10.10.60">
    <property type="entry name" value="Homeodomain-like"/>
    <property type="match status" value="1"/>
</dbReference>
<dbReference type="InterPro" id="IPR050296">
    <property type="entry name" value="Antp_homeobox"/>
</dbReference>
<dbReference type="InterPro" id="IPR001356">
    <property type="entry name" value="HD"/>
</dbReference>
<dbReference type="InterPro" id="IPR020479">
    <property type="entry name" value="HD_metazoa"/>
</dbReference>
<dbReference type="InterPro" id="IPR001827">
    <property type="entry name" value="Homeobox_Antennapedia_CS"/>
</dbReference>
<dbReference type="InterPro" id="IPR017970">
    <property type="entry name" value="Homeobox_CS"/>
</dbReference>
<dbReference type="InterPro" id="IPR009057">
    <property type="entry name" value="Homeodomain-like_sf"/>
</dbReference>
<dbReference type="PANTHER" id="PTHR45659">
    <property type="entry name" value="HOMEOBOX PROTEIN HOX"/>
    <property type="match status" value="1"/>
</dbReference>
<dbReference type="PANTHER" id="PTHR45659:SF1">
    <property type="entry name" value="HOMEOBOX PROTEIN HOX-C6"/>
    <property type="match status" value="1"/>
</dbReference>
<dbReference type="Pfam" id="PF00046">
    <property type="entry name" value="Homeodomain"/>
    <property type="match status" value="1"/>
</dbReference>
<dbReference type="PRINTS" id="PR00024">
    <property type="entry name" value="HOMEOBOX"/>
</dbReference>
<dbReference type="SMART" id="SM00389">
    <property type="entry name" value="HOX"/>
    <property type="match status" value="1"/>
</dbReference>
<dbReference type="SUPFAM" id="SSF46689">
    <property type="entry name" value="Homeodomain-like"/>
    <property type="match status" value="1"/>
</dbReference>
<dbReference type="PROSITE" id="PS00032">
    <property type="entry name" value="ANTENNAPEDIA"/>
    <property type="match status" value="1"/>
</dbReference>
<dbReference type="PROSITE" id="PS00027">
    <property type="entry name" value="HOMEOBOX_1"/>
    <property type="match status" value="1"/>
</dbReference>
<dbReference type="PROSITE" id="PS50071">
    <property type="entry name" value="HOMEOBOX_2"/>
    <property type="match status" value="1"/>
</dbReference>
<proteinExistence type="evidence at transcript level"/>
<gene>
    <name type="primary">HOXC6</name>
    <name type="synonym">NVHOX1</name>
</gene>
<sequence>MNSYFTNPSLSCHLASGQEVLPNVALNSSAYDPVRHFSTYGEAVAQNRIYSSPFYSPQDNVVFSSGRGPYEYGSNAFYQDKDMLSSCRQNAMGHNTQTSIAQDFSSDQSRASVQEQKTSIQIYPWMQRMNSHSGVGYGTDRRRGRQIYSRYQTLELEKEFHFNRYLTRRRRIEIANASCLTERQIKIWFQNRRMKWKKESNLTSTLSGGTGAASDSLAEGKEKEEETEEEQQKE</sequence>
<feature type="chain" id="PRO_0000200179" description="Homeobox protein Hox-C6">
    <location>
        <begin position="1"/>
        <end position="234"/>
    </location>
</feature>
<feature type="DNA-binding region" description="Homeobox" evidence="1">
    <location>
        <begin position="141"/>
        <end position="200"/>
    </location>
</feature>
<feature type="region of interest" description="Disordered" evidence="2">
    <location>
        <begin position="200"/>
        <end position="234"/>
    </location>
</feature>
<feature type="short sequence motif" description="Antp-type hexapeptide">
    <location>
        <begin position="122"/>
        <end position="127"/>
    </location>
</feature>
<feature type="compositionally biased region" description="Basic and acidic residues" evidence="2">
    <location>
        <begin position="218"/>
        <end position="234"/>
    </location>
</feature>
<organism>
    <name type="scientific">Notophthalmus viridescens</name>
    <name type="common">Eastern newt</name>
    <name type="synonym">Triturus viridescens</name>
    <dbReference type="NCBI Taxonomy" id="8316"/>
    <lineage>
        <taxon>Eukaryota</taxon>
        <taxon>Metazoa</taxon>
        <taxon>Chordata</taxon>
        <taxon>Craniata</taxon>
        <taxon>Vertebrata</taxon>
        <taxon>Euteleostomi</taxon>
        <taxon>Amphibia</taxon>
        <taxon>Batrachia</taxon>
        <taxon>Caudata</taxon>
        <taxon>Salamandroidea</taxon>
        <taxon>Salamandridae</taxon>
        <taxon>Pleurodelinae</taxon>
        <taxon>Notophthalmus</taxon>
    </lineage>
</organism>
<keyword id="KW-0217">Developmental protein</keyword>
<keyword id="KW-0238">DNA-binding</keyword>
<keyword id="KW-0371">Homeobox</keyword>
<keyword id="KW-0539">Nucleus</keyword>
<keyword id="KW-0804">Transcription</keyword>
<keyword id="KW-0805">Transcription regulation</keyword>
<comment type="function">
    <text>Sequence-specific transcription factor which is part of a developmental regulatory system that provides cells with specific positional identities on the anterior-posterior axis.</text>
</comment>
<comment type="subcellular location">
    <subcellularLocation>
        <location>Nucleus</location>
    </subcellularLocation>
</comment>
<comment type="similarity">
    <text evidence="3">Belongs to the Antp homeobox family.</text>
</comment>